<organism>
    <name type="scientific">Brassica napus</name>
    <name type="common">Rape</name>
    <dbReference type="NCBI Taxonomy" id="3708"/>
    <lineage>
        <taxon>Eukaryota</taxon>
        <taxon>Viridiplantae</taxon>
        <taxon>Streptophyta</taxon>
        <taxon>Embryophyta</taxon>
        <taxon>Tracheophyta</taxon>
        <taxon>Spermatophyta</taxon>
        <taxon>Magnoliopsida</taxon>
        <taxon>eudicotyledons</taxon>
        <taxon>Gunneridae</taxon>
        <taxon>Pentapetalae</taxon>
        <taxon>rosids</taxon>
        <taxon>malvids</taxon>
        <taxon>Brassicales</taxon>
        <taxon>Brassicaceae</taxon>
        <taxon>Brassiceae</taxon>
        <taxon>Brassica</taxon>
    </lineage>
</organism>
<feature type="signal peptide" evidence="2">
    <location>
        <begin position="1"/>
        <end position="17"/>
    </location>
</feature>
<feature type="chain" id="PRO_0000010836" description="Germin-like protein 1">
    <location>
        <begin position="18"/>
        <end position="207"/>
    </location>
</feature>
<feature type="domain" description="Cupin type-1" evidence="2">
    <location>
        <begin position="51"/>
        <end position="197"/>
    </location>
</feature>
<feature type="binding site" evidence="1">
    <location>
        <position position="99"/>
    </location>
    <ligand>
        <name>Mn(2+)</name>
        <dbReference type="ChEBI" id="CHEBI:29035"/>
    </ligand>
</feature>
<feature type="binding site" evidence="1">
    <location>
        <position position="101"/>
    </location>
    <ligand>
        <name>Mn(2+)</name>
        <dbReference type="ChEBI" id="CHEBI:29035"/>
    </ligand>
</feature>
<feature type="binding site" evidence="1">
    <location>
        <position position="106"/>
    </location>
    <ligand>
        <name>Mn(2+)</name>
        <dbReference type="ChEBI" id="CHEBI:29035"/>
    </ligand>
</feature>
<feature type="binding site" evidence="1">
    <location>
        <position position="145"/>
    </location>
    <ligand>
        <name>Mn(2+)</name>
        <dbReference type="ChEBI" id="CHEBI:29035"/>
    </ligand>
</feature>
<feature type="glycosylation site" description="N-linked (GlcNAc...) asparagine" evidence="2">
    <location>
        <position position="58"/>
    </location>
</feature>
<feature type="disulfide bond" evidence="1">
    <location>
        <begin position="23"/>
        <end position="38"/>
    </location>
</feature>
<gene>
    <name type="primary">GER1</name>
</gene>
<evidence type="ECO:0000250" key="1"/>
<evidence type="ECO:0000255" key="2"/>
<evidence type="ECO:0000305" key="3"/>
<protein>
    <recommendedName>
        <fullName>Germin-like protein 1</fullName>
    </recommendedName>
</protein>
<reference key="1">
    <citation type="journal article" date="1997" name="Plant Mol. Biol.">
        <title>cDNA sequence, genomic organization and differential expression of three Arabidopsis genes for germin/oxalate oxidase-like proteins.</title>
        <authorList>
            <person name="Membre N."/>
            <person name="Berna A."/>
            <person name="Neutelings G."/>
            <person name="David A."/>
            <person name="David H."/>
            <person name="Staiger D."/>
            <person name="Saez Vasquez J."/>
            <person name="Raynal M."/>
            <person name="Delseny M."/>
            <person name="Bernier F."/>
        </authorList>
    </citation>
    <scope>NUCLEOTIDE SEQUENCE [MRNA]</scope>
    <source>
        <strain>cv. Samourai</strain>
        <tissue>Seedling</tissue>
    </source>
</reference>
<accession>P46271</accession>
<keyword id="KW-0052">Apoplast</keyword>
<keyword id="KW-1015">Disulfide bond</keyword>
<keyword id="KW-0325">Glycoprotein</keyword>
<keyword id="KW-0464">Manganese</keyword>
<keyword id="KW-0479">Metal-binding</keyword>
<keyword id="KW-0964">Secreted</keyword>
<keyword id="KW-0732">Signal</keyword>
<proteinExistence type="evidence at transcript level"/>
<name>GLP1_BRANA</name>
<comment type="function">
    <text>May play a role in plant defense. Probably has no oxalate oxidase activity even if the active site is conserved.</text>
</comment>
<comment type="subunit">
    <text evidence="1">Oligomer (believed to be a pentamer but probably hexamer).</text>
</comment>
<comment type="subcellular location">
    <subcellularLocation>
        <location evidence="1">Secreted</location>
        <location evidence="1">Extracellular space</location>
        <location evidence="1">Apoplast</location>
    </subcellularLocation>
</comment>
<comment type="similarity">
    <text evidence="3">Belongs to the germin family.</text>
</comment>
<dbReference type="EMBL" id="U21743">
    <property type="protein sequence ID" value="AAA86365.1"/>
    <property type="molecule type" value="mRNA"/>
</dbReference>
<dbReference type="PIR" id="T07854">
    <property type="entry name" value="T07854"/>
</dbReference>
<dbReference type="RefSeq" id="NP_001302724.1">
    <property type="nucleotide sequence ID" value="NM_001315795.1"/>
</dbReference>
<dbReference type="SMR" id="P46271"/>
<dbReference type="GlyCosmos" id="P46271">
    <property type="glycosylation" value="1 site, No reported glycans"/>
</dbReference>
<dbReference type="GeneID" id="106354228"/>
<dbReference type="KEGG" id="bna:106354228"/>
<dbReference type="OrthoDB" id="1921208at2759"/>
<dbReference type="GO" id="GO:0048046">
    <property type="term" value="C:apoplast"/>
    <property type="evidence" value="ECO:0007669"/>
    <property type="project" value="UniProtKB-SubCell"/>
</dbReference>
<dbReference type="GO" id="GO:0030145">
    <property type="term" value="F:manganese ion binding"/>
    <property type="evidence" value="ECO:0007669"/>
    <property type="project" value="InterPro"/>
</dbReference>
<dbReference type="CDD" id="cd02241">
    <property type="entry name" value="cupin_OxOx"/>
    <property type="match status" value="1"/>
</dbReference>
<dbReference type="FunFam" id="2.60.120.10:FF:000047">
    <property type="entry name" value="Auxin-binding protein ABP19a"/>
    <property type="match status" value="1"/>
</dbReference>
<dbReference type="Gene3D" id="2.60.120.10">
    <property type="entry name" value="Jelly Rolls"/>
    <property type="match status" value="1"/>
</dbReference>
<dbReference type="InterPro" id="IPR006045">
    <property type="entry name" value="Cupin_1"/>
</dbReference>
<dbReference type="InterPro" id="IPR001929">
    <property type="entry name" value="Germin"/>
</dbReference>
<dbReference type="InterPro" id="IPR019780">
    <property type="entry name" value="Germin_Mn-BS"/>
</dbReference>
<dbReference type="InterPro" id="IPR014710">
    <property type="entry name" value="RmlC-like_jellyroll"/>
</dbReference>
<dbReference type="InterPro" id="IPR011051">
    <property type="entry name" value="RmlC_Cupin_sf"/>
</dbReference>
<dbReference type="PANTHER" id="PTHR31238">
    <property type="entry name" value="GERMIN-LIKE PROTEIN SUBFAMILY 3 MEMBER 3"/>
    <property type="match status" value="1"/>
</dbReference>
<dbReference type="Pfam" id="PF00190">
    <property type="entry name" value="Cupin_1"/>
    <property type="match status" value="1"/>
</dbReference>
<dbReference type="PRINTS" id="PR00325">
    <property type="entry name" value="GERMIN"/>
</dbReference>
<dbReference type="SMART" id="SM00835">
    <property type="entry name" value="Cupin_1"/>
    <property type="match status" value="1"/>
</dbReference>
<dbReference type="SUPFAM" id="SSF51182">
    <property type="entry name" value="RmlC-like cupins"/>
    <property type="match status" value="1"/>
</dbReference>
<dbReference type="PROSITE" id="PS00725">
    <property type="entry name" value="GERMIN"/>
    <property type="match status" value="1"/>
</dbReference>
<sequence length="207" mass="21514">MLRIIFLLSLLFALSNDSVQDFCVANLKRAETPAGYPCIRPIHVKASDFVFSLGTPGNTTNIISAAVTPGFVAQFPALNGLGISTARLDLAPKGVIPMHTHPGASEVLFVLDGSITAGFISSANSVYVQTLKPGQVMVFPQGLLHFQINAGKTPAAALVTFSSASPGLQILDFALFANTLSTELVSATTFLPPATVKTLKGVLGGTG</sequence>